<evidence type="ECO:0000255" key="1">
    <source>
        <dbReference type="HAMAP-Rule" id="MF_01595"/>
    </source>
</evidence>
<proteinExistence type="inferred from homology"/>
<accession>A6QGH3</accession>
<name>PNP_STAAE</name>
<organism>
    <name type="scientific">Staphylococcus aureus (strain Newman)</name>
    <dbReference type="NCBI Taxonomy" id="426430"/>
    <lineage>
        <taxon>Bacteria</taxon>
        <taxon>Bacillati</taxon>
        <taxon>Bacillota</taxon>
        <taxon>Bacilli</taxon>
        <taxon>Bacillales</taxon>
        <taxon>Staphylococcaceae</taxon>
        <taxon>Staphylococcus</taxon>
    </lineage>
</organism>
<keyword id="KW-0963">Cytoplasm</keyword>
<keyword id="KW-0460">Magnesium</keyword>
<keyword id="KW-0479">Metal-binding</keyword>
<keyword id="KW-0548">Nucleotidyltransferase</keyword>
<keyword id="KW-0694">RNA-binding</keyword>
<keyword id="KW-0808">Transferase</keyword>
<sequence>MSQEKKVFKTEWAGRSLTIETGQLAKQANGAVLVRYGDTVVLSTATASKEPRDGDFFPLTVNYEEKMYAAGKIPGGFKKREGRPGDDATLTARLIDRPIRPLFPKGYKHDVQIMNMVLSADPDCSPQMAAMIGSSMALSVSDIPFQGPIAGVNVGYIDGKYIINPTVEEKEVSRLDLEVAGHKDAVNMVEAGASEITEQEMLEAIFFGHEEIQRLVDFQQQIVDHIQPVKQEFIPAERDEALVERVKSLTEEKGLKETVLTFDKQQRDENLDNLKEEIVNEFIDEEDPENELLIKEVYAILNELVKEEVRRLIADEKIRPDGRKPDEIRPLDSEVGILPRTHGSGLFTRGQTQALSVLTLGALGDYQLIDGLGPEEEKRFMHHYNFPNFSVGETGPVRAPGRREIGHGALGERALKYIIPDTADFPYTIRIVSEVLESNGSSSQASICGSTLALMDAGVPIKAPVAGIAMGLVTREDSYTILTDIQGMEDALGDMDFKVAGTKEGITAIQMDIKIDGLTREIIEEALEQARRGRLEIMNHMLQTIDQPRTELSAYAPKVVTMTIKPDKIRDVIGPGGKKINEIIDETGVKLDIEQDGTIFIGAVDQAMINRAREIIEEITREAEVGQTYQATVKRIEKYGAFVGLFPGKDALLHISQISKNRIEKVEDVLKIGDTIEVKITEIDKQGRVNASHRALEE</sequence>
<protein>
    <recommendedName>
        <fullName evidence="1">Polyribonucleotide nucleotidyltransferase</fullName>
        <ecNumber evidence="1">2.7.7.8</ecNumber>
    </recommendedName>
    <alternativeName>
        <fullName evidence="1">Polynucleotide phosphorylase</fullName>
        <shortName evidence="1">PNPase</shortName>
    </alternativeName>
</protein>
<gene>
    <name evidence="1" type="primary">pnp</name>
    <name type="synonym">pnpA</name>
    <name type="ordered locus">NWMN_1183</name>
</gene>
<reference key="1">
    <citation type="journal article" date="2008" name="J. Bacteriol.">
        <title>Genome sequence of Staphylococcus aureus strain Newman and comparative analysis of staphylococcal genomes: polymorphism and evolution of two major pathogenicity islands.</title>
        <authorList>
            <person name="Baba T."/>
            <person name="Bae T."/>
            <person name="Schneewind O."/>
            <person name="Takeuchi F."/>
            <person name="Hiramatsu K."/>
        </authorList>
    </citation>
    <scope>NUCLEOTIDE SEQUENCE [LARGE SCALE GENOMIC DNA]</scope>
    <source>
        <strain>Newman</strain>
    </source>
</reference>
<comment type="function">
    <text evidence="1">Involved in mRNA degradation. Catalyzes the phosphorolysis of single-stranded polyribonucleotides processively in the 3'- to 5'-direction.</text>
</comment>
<comment type="catalytic activity">
    <reaction evidence="1">
        <text>RNA(n+1) + phosphate = RNA(n) + a ribonucleoside 5'-diphosphate</text>
        <dbReference type="Rhea" id="RHEA:22096"/>
        <dbReference type="Rhea" id="RHEA-COMP:14527"/>
        <dbReference type="Rhea" id="RHEA-COMP:17342"/>
        <dbReference type="ChEBI" id="CHEBI:43474"/>
        <dbReference type="ChEBI" id="CHEBI:57930"/>
        <dbReference type="ChEBI" id="CHEBI:140395"/>
        <dbReference type="EC" id="2.7.7.8"/>
    </reaction>
</comment>
<comment type="cofactor">
    <cofactor evidence="1">
        <name>Mg(2+)</name>
        <dbReference type="ChEBI" id="CHEBI:18420"/>
    </cofactor>
</comment>
<comment type="subcellular location">
    <subcellularLocation>
        <location evidence="1">Cytoplasm</location>
    </subcellularLocation>
</comment>
<comment type="similarity">
    <text evidence="1">Belongs to the polyribonucleotide nucleotidyltransferase family.</text>
</comment>
<feature type="chain" id="PRO_0000329863" description="Polyribonucleotide nucleotidyltransferase">
    <location>
        <begin position="1"/>
        <end position="698"/>
    </location>
</feature>
<feature type="domain" description="KH" evidence="1">
    <location>
        <begin position="557"/>
        <end position="616"/>
    </location>
</feature>
<feature type="domain" description="S1 motif" evidence="1">
    <location>
        <begin position="626"/>
        <end position="694"/>
    </location>
</feature>
<feature type="binding site" evidence="1">
    <location>
        <position position="490"/>
    </location>
    <ligand>
        <name>Mg(2+)</name>
        <dbReference type="ChEBI" id="CHEBI:18420"/>
    </ligand>
</feature>
<feature type="binding site" evidence="1">
    <location>
        <position position="496"/>
    </location>
    <ligand>
        <name>Mg(2+)</name>
        <dbReference type="ChEBI" id="CHEBI:18420"/>
    </ligand>
</feature>
<dbReference type="EC" id="2.7.7.8" evidence="1"/>
<dbReference type="EMBL" id="AP009351">
    <property type="protein sequence ID" value="BAF67455.1"/>
    <property type="molecule type" value="Genomic_DNA"/>
</dbReference>
<dbReference type="RefSeq" id="WP_000076690.1">
    <property type="nucleotide sequence ID" value="NZ_JBBIAE010000001.1"/>
</dbReference>
<dbReference type="SMR" id="A6QGH3"/>
<dbReference type="KEGG" id="sae:NWMN_1183"/>
<dbReference type="HOGENOM" id="CLU_004217_2_2_9"/>
<dbReference type="Proteomes" id="UP000006386">
    <property type="component" value="Chromosome"/>
</dbReference>
<dbReference type="GO" id="GO:0005829">
    <property type="term" value="C:cytosol"/>
    <property type="evidence" value="ECO:0007669"/>
    <property type="project" value="TreeGrafter"/>
</dbReference>
<dbReference type="GO" id="GO:0000175">
    <property type="term" value="F:3'-5'-RNA exonuclease activity"/>
    <property type="evidence" value="ECO:0007669"/>
    <property type="project" value="TreeGrafter"/>
</dbReference>
<dbReference type="GO" id="GO:0000287">
    <property type="term" value="F:magnesium ion binding"/>
    <property type="evidence" value="ECO:0007669"/>
    <property type="project" value="UniProtKB-UniRule"/>
</dbReference>
<dbReference type="GO" id="GO:0004654">
    <property type="term" value="F:polyribonucleotide nucleotidyltransferase activity"/>
    <property type="evidence" value="ECO:0007669"/>
    <property type="project" value="UniProtKB-UniRule"/>
</dbReference>
<dbReference type="GO" id="GO:0003723">
    <property type="term" value="F:RNA binding"/>
    <property type="evidence" value="ECO:0007669"/>
    <property type="project" value="UniProtKB-UniRule"/>
</dbReference>
<dbReference type="GO" id="GO:0006402">
    <property type="term" value="P:mRNA catabolic process"/>
    <property type="evidence" value="ECO:0007669"/>
    <property type="project" value="UniProtKB-UniRule"/>
</dbReference>
<dbReference type="GO" id="GO:0006396">
    <property type="term" value="P:RNA processing"/>
    <property type="evidence" value="ECO:0007669"/>
    <property type="project" value="InterPro"/>
</dbReference>
<dbReference type="CDD" id="cd02393">
    <property type="entry name" value="KH-I_PNPase"/>
    <property type="match status" value="1"/>
</dbReference>
<dbReference type="CDD" id="cd11363">
    <property type="entry name" value="RNase_PH_PNPase_1"/>
    <property type="match status" value="1"/>
</dbReference>
<dbReference type="CDD" id="cd11364">
    <property type="entry name" value="RNase_PH_PNPase_2"/>
    <property type="match status" value="1"/>
</dbReference>
<dbReference type="CDD" id="cd04472">
    <property type="entry name" value="S1_PNPase"/>
    <property type="match status" value="1"/>
</dbReference>
<dbReference type="FunFam" id="2.40.50.140:FF:000023">
    <property type="entry name" value="Polyribonucleotide nucleotidyltransferase"/>
    <property type="match status" value="1"/>
</dbReference>
<dbReference type="FunFam" id="3.30.1370.10:FF:000001">
    <property type="entry name" value="Polyribonucleotide nucleotidyltransferase"/>
    <property type="match status" value="1"/>
</dbReference>
<dbReference type="FunFam" id="3.30.230.70:FF:000001">
    <property type="entry name" value="Polyribonucleotide nucleotidyltransferase"/>
    <property type="match status" value="1"/>
</dbReference>
<dbReference type="FunFam" id="3.30.230.70:FF:000002">
    <property type="entry name" value="Polyribonucleotide nucleotidyltransferase"/>
    <property type="match status" value="1"/>
</dbReference>
<dbReference type="Gene3D" id="3.30.230.70">
    <property type="entry name" value="GHMP Kinase, N-terminal domain"/>
    <property type="match status" value="2"/>
</dbReference>
<dbReference type="Gene3D" id="3.30.1370.10">
    <property type="entry name" value="K Homology domain, type 1"/>
    <property type="match status" value="1"/>
</dbReference>
<dbReference type="Gene3D" id="2.40.50.140">
    <property type="entry name" value="Nucleic acid-binding proteins"/>
    <property type="match status" value="1"/>
</dbReference>
<dbReference type="HAMAP" id="MF_01595">
    <property type="entry name" value="PNPase"/>
    <property type="match status" value="1"/>
</dbReference>
<dbReference type="InterPro" id="IPR001247">
    <property type="entry name" value="ExoRNase_PH_dom1"/>
</dbReference>
<dbReference type="InterPro" id="IPR015847">
    <property type="entry name" value="ExoRNase_PH_dom2"/>
</dbReference>
<dbReference type="InterPro" id="IPR036345">
    <property type="entry name" value="ExoRNase_PH_dom2_sf"/>
</dbReference>
<dbReference type="InterPro" id="IPR004087">
    <property type="entry name" value="KH_dom"/>
</dbReference>
<dbReference type="InterPro" id="IPR004088">
    <property type="entry name" value="KH_dom_type_1"/>
</dbReference>
<dbReference type="InterPro" id="IPR036612">
    <property type="entry name" value="KH_dom_type_1_sf"/>
</dbReference>
<dbReference type="InterPro" id="IPR012340">
    <property type="entry name" value="NA-bd_OB-fold"/>
</dbReference>
<dbReference type="InterPro" id="IPR012162">
    <property type="entry name" value="PNPase"/>
</dbReference>
<dbReference type="InterPro" id="IPR027408">
    <property type="entry name" value="PNPase/RNase_PH_dom_sf"/>
</dbReference>
<dbReference type="InterPro" id="IPR015848">
    <property type="entry name" value="PNPase_PH_RNA-bd_bac/org-type"/>
</dbReference>
<dbReference type="InterPro" id="IPR036456">
    <property type="entry name" value="PNPase_PH_RNA-bd_sf"/>
</dbReference>
<dbReference type="InterPro" id="IPR020568">
    <property type="entry name" value="Ribosomal_Su5_D2-typ_SF"/>
</dbReference>
<dbReference type="InterPro" id="IPR003029">
    <property type="entry name" value="S1_domain"/>
</dbReference>
<dbReference type="NCBIfam" id="TIGR03591">
    <property type="entry name" value="polynuc_phos"/>
    <property type="match status" value="1"/>
</dbReference>
<dbReference type="NCBIfam" id="NF008805">
    <property type="entry name" value="PRK11824.1"/>
    <property type="match status" value="1"/>
</dbReference>
<dbReference type="PANTHER" id="PTHR11252">
    <property type="entry name" value="POLYRIBONUCLEOTIDE NUCLEOTIDYLTRANSFERASE"/>
    <property type="match status" value="1"/>
</dbReference>
<dbReference type="PANTHER" id="PTHR11252:SF0">
    <property type="entry name" value="POLYRIBONUCLEOTIDE NUCLEOTIDYLTRANSFERASE 1, MITOCHONDRIAL"/>
    <property type="match status" value="1"/>
</dbReference>
<dbReference type="Pfam" id="PF00013">
    <property type="entry name" value="KH_1"/>
    <property type="match status" value="1"/>
</dbReference>
<dbReference type="Pfam" id="PF03726">
    <property type="entry name" value="PNPase"/>
    <property type="match status" value="1"/>
</dbReference>
<dbReference type="Pfam" id="PF01138">
    <property type="entry name" value="RNase_PH"/>
    <property type="match status" value="2"/>
</dbReference>
<dbReference type="Pfam" id="PF03725">
    <property type="entry name" value="RNase_PH_C"/>
    <property type="match status" value="2"/>
</dbReference>
<dbReference type="Pfam" id="PF00575">
    <property type="entry name" value="S1"/>
    <property type="match status" value="1"/>
</dbReference>
<dbReference type="PIRSF" id="PIRSF005499">
    <property type="entry name" value="PNPase"/>
    <property type="match status" value="1"/>
</dbReference>
<dbReference type="SMART" id="SM00322">
    <property type="entry name" value="KH"/>
    <property type="match status" value="1"/>
</dbReference>
<dbReference type="SMART" id="SM00316">
    <property type="entry name" value="S1"/>
    <property type="match status" value="1"/>
</dbReference>
<dbReference type="SUPFAM" id="SSF54791">
    <property type="entry name" value="Eukaryotic type KH-domain (KH-domain type I)"/>
    <property type="match status" value="1"/>
</dbReference>
<dbReference type="SUPFAM" id="SSF50249">
    <property type="entry name" value="Nucleic acid-binding proteins"/>
    <property type="match status" value="1"/>
</dbReference>
<dbReference type="SUPFAM" id="SSF46915">
    <property type="entry name" value="Polynucleotide phosphorylase/guanosine pentaphosphate synthase (PNPase/GPSI), domain 3"/>
    <property type="match status" value="1"/>
</dbReference>
<dbReference type="SUPFAM" id="SSF55666">
    <property type="entry name" value="Ribonuclease PH domain 2-like"/>
    <property type="match status" value="2"/>
</dbReference>
<dbReference type="SUPFAM" id="SSF54211">
    <property type="entry name" value="Ribosomal protein S5 domain 2-like"/>
    <property type="match status" value="2"/>
</dbReference>
<dbReference type="PROSITE" id="PS50084">
    <property type="entry name" value="KH_TYPE_1"/>
    <property type="match status" value="1"/>
</dbReference>
<dbReference type="PROSITE" id="PS50126">
    <property type="entry name" value="S1"/>
    <property type="match status" value="1"/>
</dbReference>